<gene>
    <name type="ordered locus">Mjls_4916</name>
</gene>
<sequence length="224" mass="24302">MTAPQEPEDAAGSIFSTSGDRAVADAAERAKVTASRNIPVFDDLPLPADTANLRKGVDFNDALLALLPLVGVWRGEGEGRGPHGDYRFGQQIVVSHDGGDYLNWEARSWRLTESGEYDRVGLRETGFWRFVSDPADPSESQAIELLLAHSAGYIELFYGHPRNQSSWELVTDALARSKSGMLVGGAKRLYGIVEGGDLAYVEERVDADGGLVPHLSARLARYVG</sequence>
<name>NB2_MYCSJ</name>
<reference key="1">
    <citation type="submission" date="2007-02" db="EMBL/GenBank/DDBJ databases">
        <title>Complete sequence of Mycobacterium sp. JLS.</title>
        <authorList>
            <consortium name="US DOE Joint Genome Institute"/>
            <person name="Copeland A."/>
            <person name="Lucas S."/>
            <person name="Lapidus A."/>
            <person name="Barry K."/>
            <person name="Detter J.C."/>
            <person name="Glavina del Rio T."/>
            <person name="Hammon N."/>
            <person name="Israni S."/>
            <person name="Dalin E."/>
            <person name="Tice H."/>
            <person name="Pitluck S."/>
            <person name="Chain P."/>
            <person name="Malfatti S."/>
            <person name="Shin M."/>
            <person name="Vergez L."/>
            <person name="Schmutz J."/>
            <person name="Larimer F."/>
            <person name="Land M."/>
            <person name="Hauser L."/>
            <person name="Kyrpides N."/>
            <person name="Mikhailova N."/>
            <person name="Miller C.D."/>
            <person name="Anderson A.J."/>
            <person name="Sims R.C."/>
            <person name="Richardson P."/>
        </authorList>
    </citation>
    <scope>NUCLEOTIDE SEQUENCE [LARGE SCALE GENOMIC DNA]</scope>
    <source>
        <strain>JLS</strain>
    </source>
</reference>
<dbReference type="EC" id="5.99.-.-" evidence="1"/>
<dbReference type="EMBL" id="CP000580">
    <property type="protein sequence ID" value="ABO00682.1"/>
    <property type="molecule type" value="Genomic_DNA"/>
</dbReference>
<dbReference type="SMR" id="A3Q6A4"/>
<dbReference type="KEGG" id="mjl:Mjls_4916"/>
<dbReference type="HOGENOM" id="CLU_085483_0_0_11"/>
<dbReference type="BioCyc" id="MSP164757:G1G8C-4966-MONOMER"/>
<dbReference type="GO" id="GO:0020037">
    <property type="term" value="F:heme binding"/>
    <property type="evidence" value="ECO:0007669"/>
    <property type="project" value="UniProtKB-UniRule"/>
</dbReference>
<dbReference type="GO" id="GO:0046872">
    <property type="term" value="F:metal ion binding"/>
    <property type="evidence" value="ECO:0007669"/>
    <property type="project" value="UniProtKB-KW"/>
</dbReference>
<dbReference type="GO" id="GO:0062213">
    <property type="term" value="F:peroxynitrite isomerase activity"/>
    <property type="evidence" value="ECO:0007669"/>
    <property type="project" value="UniProtKB-UniRule"/>
</dbReference>
<dbReference type="CDD" id="cd07828">
    <property type="entry name" value="lipocalin_heme-bd-THAP4-like"/>
    <property type="match status" value="1"/>
</dbReference>
<dbReference type="Gene3D" id="2.40.128.20">
    <property type="match status" value="1"/>
</dbReference>
<dbReference type="HAMAP" id="MF_01297">
    <property type="entry name" value="nitrobindin"/>
    <property type="match status" value="1"/>
</dbReference>
<dbReference type="InterPro" id="IPR012674">
    <property type="entry name" value="Calycin"/>
</dbReference>
<dbReference type="InterPro" id="IPR022939">
    <property type="entry name" value="Nb(III)_bact/plant"/>
</dbReference>
<dbReference type="InterPro" id="IPR045165">
    <property type="entry name" value="Nitrobindin"/>
</dbReference>
<dbReference type="InterPro" id="IPR014878">
    <property type="entry name" value="THAP4-like_heme-bd"/>
</dbReference>
<dbReference type="PANTHER" id="PTHR15854:SF4">
    <property type="entry name" value="PEROXYNITRITE ISOMERASE THAP4"/>
    <property type="match status" value="1"/>
</dbReference>
<dbReference type="PANTHER" id="PTHR15854">
    <property type="entry name" value="THAP4 PROTEIN"/>
    <property type="match status" value="1"/>
</dbReference>
<dbReference type="Pfam" id="PF08768">
    <property type="entry name" value="THAP4_heme-bd"/>
    <property type="match status" value="1"/>
</dbReference>
<dbReference type="SUPFAM" id="SSF50814">
    <property type="entry name" value="Lipocalins"/>
    <property type="match status" value="1"/>
</dbReference>
<protein>
    <recommendedName>
        <fullName>Peroxynitrite isomerase 2</fullName>
        <ecNumber evidence="1">5.99.-.-</ecNumber>
    </recommendedName>
    <alternativeName>
        <fullName>Ferric nitrobindin</fullName>
        <shortName>Nb(III)</shortName>
    </alternativeName>
</protein>
<evidence type="ECO:0000255" key="1">
    <source>
        <dbReference type="HAMAP-Rule" id="MF_01297"/>
    </source>
</evidence>
<comment type="function">
    <text evidence="1">Heme-binding protein able to scavenge peroxynitrite and to protect free L-tyrosine against peroxynitrite-mediated nitration, by acting as a peroxynitrite isomerase that converts peroxynitrite to nitrate. Therefore, this protein likely plays a role in peroxynitrite sensing and in the detoxification of reactive nitrogen and oxygen species (RNS and ROS, respectively). Is able to bind nitric oxide (NO) in vitro, but may act as a sensor of peroxynitrite levels in vivo.</text>
</comment>
<comment type="catalytic activity">
    <reaction evidence="1">
        <text>peroxynitrite = nitrate</text>
        <dbReference type="Rhea" id="RHEA:63116"/>
        <dbReference type="ChEBI" id="CHEBI:17632"/>
        <dbReference type="ChEBI" id="CHEBI:25941"/>
    </reaction>
    <physiologicalReaction direction="left-to-right" evidence="1">
        <dbReference type="Rhea" id="RHEA:63117"/>
    </physiologicalReaction>
</comment>
<comment type="cofactor">
    <cofactor evidence="1">
        <name>heme b</name>
        <dbReference type="ChEBI" id="CHEBI:60344"/>
    </cofactor>
    <text evidence="1">Binds 1 heme b group per subunit, that coordinates a highly solvent-exposed Fe(III) atom.</text>
</comment>
<comment type="pathway">
    <text evidence="1">Nitrogen metabolism.</text>
</comment>
<comment type="subunit">
    <text evidence="1">Homodimer.</text>
</comment>
<comment type="domain">
    <text evidence="1">Forms a 10-stranded antiparallel beta-barrel structure able to accommodate a hydrophobic ligand in its interior. In fact, this fold hosts the heme group, which is located in a wide surface cleft.</text>
</comment>
<comment type="similarity">
    <text evidence="1">Belongs to the nitrobindin family.</text>
</comment>
<organism>
    <name type="scientific">Mycobacterium sp. (strain JLS)</name>
    <dbReference type="NCBI Taxonomy" id="164757"/>
    <lineage>
        <taxon>Bacteria</taxon>
        <taxon>Bacillati</taxon>
        <taxon>Actinomycetota</taxon>
        <taxon>Actinomycetes</taxon>
        <taxon>Mycobacteriales</taxon>
        <taxon>Mycobacteriaceae</taxon>
        <taxon>Mycobacterium</taxon>
    </lineage>
</organism>
<accession>A3Q6A4</accession>
<feature type="chain" id="PRO_0000356929" description="Peroxynitrite isomerase 2">
    <location>
        <begin position="1"/>
        <end position="224"/>
    </location>
</feature>
<feature type="short sequence motif" description="GXWXGXG" evidence="1">
    <location>
        <begin position="71"/>
        <end position="77"/>
    </location>
</feature>
<feature type="binding site" evidence="1">
    <location>
        <position position="187"/>
    </location>
    <ligand>
        <name>heme b</name>
        <dbReference type="ChEBI" id="CHEBI:60344"/>
    </ligand>
</feature>
<feature type="binding site" description="axial binding residue" evidence="1">
    <location>
        <position position="214"/>
    </location>
    <ligand>
        <name>heme b</name>
        <dbReference type="ChEBI" id="CHEBI:60344"/>
    </ligand>
    <ligandPart>
        <name>Fe</name>
        <dbReference type="ChEBI" id="CHEBI:18248"/>
    </ligandPart>
</feature>
<keyword id="KW-0349">Heme</keyword>
<keyword id="KW-0408">Iron</keyword>
<keyword id="KW-0413">Isomerase</keyword>
<keyword id="KW-0479">Metal-binding</keyword>
<proteinExistence type="inferred from homology"/>